<name>Y1559_ARATH</name>
<gene>
    <name type="primary">CBSDUFCH2</name>
    <name type="ordered locus">At1g55930</name>
    <name type="ORF">F14J16.20</name>
</gene>
<reference key="1">
    <citation type="journal article" date="2000" name="Nature">
        <title>Sequence and analysis of chromosome 1 of the plant Arabidopsis thaliana.</title>
        <authorList>
            <person name="Theologis A."/>
            <person name="Ecker J.R."/>
            <person name="Palm C.J."/>
            <person name="Federspiel N.A."/>
            <person name="Kaul S."/>
            <person name="White O."/>
            <person name="Alonso J."/>
            <person name="Altafi H."/>
            <person name="Araujo R."/>
            <person name="Bowman C.L."/>
            <person name="Brooks S.Y."/>
            <person name="Buehler E."/>
            <person name="Chan A."/>
            <person name="Chao Q."/>
            <person name="Chen H."/>
            <person name="Cheuk R.F."/>
            <person name="Chin C.W."/>
            <person name="Chung M.K."/>
            <person name="Conn L."/>
            <person name="Conway A.B."/>
            <person name="Conway A.R."/>
            <person name="Creasy T.H."/>
            <person name="Dewar K."/>
            <person name="Dunn P."/>
            <person name="Etgu P."/>
            <person name="Feldblyum T.V."/>
            <person name="Feng J.-D."/>
            <person name="Fong B."/>
            <person name="Fujii C.Y."/>
            <person name="Gill J.E."/>
            <person name="Goldsmith A.D."/>
            <person name="Haas B."/>
            <person name="Hansen N.F."/>
            <person name="Hughes B."/>
            <person name="Huizar L."/>
            <person name="Hunter J.L."/>
            <person name="Jenkins J."/>
            <person name="Johnson-Hopson C."/>
            <person name="Khan S."/>
            <person name="Khaykin E."/>
            <person name="Kim C.J."/>
            <person name="Koo H.L."/>
            <person name="Kremenetskaia I."/>
            <person name="Kurtz D.B."/>
            <person name="Kwan A."/>
            <person name="Lam B."/>
            <person name="Langin-Hooper S."/>
            <person name="Lee A."/>
            <person name="Lee J.M."/>
            <person name="Lenz C.A."/>
            <person name="Li J.H."/>
            <person name="Li Y.-P."/>
            <person name="Lin X."/>
            <person name="Liu S.X."/>
            <person name="Liu Z.A."/>
            <person name="Luros J.S."/>
            <person name="Maiti R."/>
            <person name="Marziali A."/>
            <person name="Militscher J."/>
            <person name="Miranda M."/>
            <person name="Nguyen M."/>
            <person name="Nierman W.C."/>
            <person name="Osborne B.I."/>
            <person name="Pai G."/>
            <person name="Peterson J."/>
            <person name="Pham P.K."/>
            <person name="Rizzo M."/>
            <person name="Rooney T."/>
            <person name="Rowley D."/>
            <person name="Sakano H."/>
            <person name="Salzberg S.L."/>
            <person name="Schwartz J.R."/>
            <person name="Shinn P."/>
            <person name="Southwick A.M."/>
            <person name="Sun H."/>
            <person name="Tallon L.J."/>
            <person name="Tambunga G."/>
            <person name="Toriumi M.J."/>
            <person name="Town C.D."/>
            <person name="Utterback T."/>
            <person name="Van Aken S."/>
            <person name="Vaysberg M."/>
            <person name="Vysotskaia V.S."/>
            <person name="Walker M."/>
            <person name="Wu D."/>
            <person name="Yu G."/>
            <person name="Fraser C.M."/>
            <person name="Venter J.C."/>
            <person name="Davis R.W."/>
        </authorList>
    </citation>
    <scope>NUCLEOTIDE SEQUENCE [LARGE SCALE GENOMIC DNA]</scope>
    <source>
        <strain>cv. Columbia</strain>
    </source>
</reference>
<reference key="2">
    <citation type="journal article" date="2017" name="Plant J.">
        <title>Araport11: a complete reannotation of the Arabidopsis thaliana reference genome.</title>
        <authorList>
            <person name="Cheng C.Y."/>
            <person name="Krishnakumar V."/>
            <person name="Chan A.P."/>
            <person name="Thibaud-Nissen F."/>
            <person name="Schobel S."/>
            <person name="Town C.D."/>
        </authorList>
    </citation>
    <scope>GENOME REANNOTATION</scope>
    <source>
        <strain>cv. Columbia</strain>
    </source>
</reference>
<reference key="3">
    <citation type="journal article" date="2003" name="Science">
        <title>Empirical analysis of transcriptional activity in the Arabidopsis genome.</title>
        <authorList>
            <person name="Yamada K."/>
            <person name="Lim J."/>
            <person name="Dale J.M."/>
            <person name="Chen H."/>
            <person name="Shinn P."/>
            <person name="Palm C.J."/>
            <person name="Southwick A.M."/>
            <person name="Wu H.C."/>
            <person name="Kim C.J."/>
            <person name="Nguyen M."/>
            <person name="Pham P.K."/>
            <person name="Cheuk R.F."/>
            <person name="Karlin-Newmann G."/>
            <person name="Liu S.X."/>
            <person name="Lam B."/>
            <person name="Sakano H."/>
            <person name="Wu T."/>
            <person name="Yu G."/>
            <person name="Miranda M."/>
            <person name="Quach H.L."/>
            <person name="Tripp M."/>
            <person name="Chang C.H."/>
            <person name="Lee J.M."/>
            <person name="Toriumi M.J."/>
            <person name="Chan M.M."/>
            <person name="Tang C.C."/>
            <person name="Onodera C.S."/>
            <person name="Deng J.M."/>
            <person name="Akiyama K."/>
            <person name="Ansari Y."/>
            <person name="Arakawa T."/>
            <person name="Banh J."/>
            <person name="Banno F."/>
            <person name="Bowser L."/>
            <person name="Brooks S.Y."/>
            <person name="Carninci P."/>
            <person name="Chao Q."/>
            <person name="Choy N."/>
            <person name="Enju A."/>
            <person name="Goldsmith A.D."/>
            <person name="Gurjal M."/>
            <person name="Hansen N.F."/>
            <person name="Hayashizaki Y."/>
            <person name="Johnson-Hopson C."/>
            <person name="Hsuan V.W."/>
            <person name="Iida K."/>
            <person name="Karnes M."/>
            <person name="Khan S."/>
            <person name="Koesema E."/>
            <person name="Ishida J."/>
            <person name="Jiang P.X."/>
            <person name="Jones T."/>
            <person name="Kawai J."/>
            <person name="Kamiya A."/>
            <person name="Meyers C."/>
            <person name="Nakajima M."/>
            <person name="Narusaka M."/>
            <person name="Seki M."/>
            <person name="Sakurai T."/>
            <person name="Satou M."/>
            <person name="Tamse R."/>
            <person name="Vaysberg M."/>
            <person name="Wallender E.K."/>
            <person name="Wong C."/>
            <person name="Yamamura Y."/>
            <person name="Yuan S."/>
            <person name="Shinozaki K."/>
            <person name="Davis R.W."/>
            <person name="Theologis A."/>
            <person name="Ecker J.R."/>
        </authorList>
    </citation>
    <scope>NUCLEOTIDE SEQUENCE [LARGE SCALE MRNA]</scope>
    <source>
        <strain>cv. Columbia</strain>
    </source>
</reference>
<reference key="4">
    <citation type="submission" date="2006-07" db="EMBL/GenBank/DDBJ databases">
        <title>Large-scale analysis of RIKEN Arabidopsis full-length (RAFL) cDNAs.</title>
        <authorList>
            <person name="Totoki Y."/>
            <person name="Seki M."/>
            <person name="Ishida J."/>
            <person name="Nakajima M."/>
            <person name="Enju A."/>
            <person name="Kamiya A."/>
            <person name="Narusaka M."/>
            <person name="Shin-i T."/>
            <person name="Nakagawa M."/>
            <person name="Sakamoto N."/>
            <person name="Oishi K."/>
            <person name="Kohara Y."/>
            <person name="Kobayashi M."/>
            <person name="Toyoda A."/>
            <person name="Sakaki Y."/>
            <person name="Sakurai T."/>
            <person name="Iida K."/>
            <person name="Akiyama K."/>
            <person name="Satou M."/>
            <person name="Toyoda T."/>
            <person name="Konagaya A."/>
            <person name="Carninci P."/>
            <person name="Kawai J."/>
            <person name="Hayashizaki Y."/>
            <person name="Shinozaki K."/>
        </authorList>
    </citation>
    <scope>NUCLEOTIDE SEQUENCE [LARGE SCALE MRNA]</scope>
    <source>
        <strain>cv. Columbia</strain>
    </source>
</reference>
<reference key="5">
    <citation type="journal article" date="2009" name="BMC Genomics">
        <title>Genome wide expression analysis of CBS domain containing proteins in Arabidopsis thaliana (L.) Heynh and Oryza sativa L. reveals their developmental and stress regulation.</title>
        <authorList>
            <person name="Kushwaha H.R."/>
            <person name="Singh A.K."/>
            <person name="Sopory S.K."/>
            <person name="Singla-Pareek S.L."/>
            <person name="Pareek A."/>
        </authorList>
    </citation>
    <scope>GENE FAMILY</scope>
    <scope>NOMENCLATURE</scope>
</reference>
<evidence type="ECO:0000255" key="1"/>
<evidence type="ECO:0000255" key="2">
    <source>
        <dbReference type="PROSITE-ProRule" id="PRU00703"/>
    </source>
</evidence>
<evidence type="ECO:0000255" key="3">
    <source>
        <dbReference type="PROSITE-ProRule" id="PRU01193"/>
    </source>
</evidence>
<evidence type="ECO:0000305" key="4"/>
<comment type="subcellular location">
    <subcellularLocation>
        <location evidence="4">Plastid</location>
        <location evidence="4">Chloroplast membrane</location>
        <topology evidence="4">Multi-pass membrane protein</topology>
    </subcellularLocation>
</comment>
<comment type="sequence caution" evidence="4">
    <conflict type="erroneous gene model prediction">
        <sequence resource="EMBL-CDS" id="AAF79321"/>
    </conflict>
</comment>
<keyword id="KW-0129">CBS domain</keyword>
<keyword id="KW-0150">Chloroplast</keyword>
<keyword id="KW-0472">Membrane</keyword>
<keyword id="KW-0934">Plastid</keyword>
<keyword id="KW-1185">Reference proteome</keyword>
<keyword id="KW-0677">Repeat</keyword>
<keyword id="KW-0809">Transit peptide</keyword>
<keyword id="KW-0812">Transmembrane</keyword>
<keyword id="KW-1133">Transmembrane helix</keyword>
<keyword id="KW-0813">Transport</keyword>
<dbReference type="EMBL" id="AC002304">
    <property type="protein sequence ID" value="AAF79321.1"/>
    <property type="status" value="ALT_SEQ"/>
    <property type="molecule type" value="Genomic_DNA"/>
</dbReference>
<dbReference type="EMBL" id="CP002684">
    <property type="protein sequence ID" value="AEE33322.1"/>
    <property type="molecule type" value="Genomic_DNA"/>
</dbReference>
<dbReference type="EMBL" id="BT006163">
    <property type="protein sequence ID" value="AAP04147.1"/>
    <property type="molecule type" value="mRNA"/>
</dbReference>
<dbReference type="EMBL" id="AK229617">
    <property type="protein sequence ID" value="BAF01462.1"/>
    <property type="molecule type" value="mRNA"/>
</dbReference>
<dbReference type="PIR" id="E96600">
    <property type="entry name" value="E96600"/>
</dbReference>
<dbReference type="RefSeq" id="NP_175989.2">
    <property type="nucleotide sequence ID" value="NM_104471.6"/>
</dbReference>
<dbReference type="SMR" id="Q84R21"/>
<dbReference type="FunCoup" id="Q84R21">
    <property type="interactions" value="107"/>
</dbReference>
<dbReference type="STRING" id="3702.Q84R21"/>
<dbReference type="iPTMnet" id="Q84R21"/>
<dbReference type="PaxDb" id="3702-AT1G55930.1"/>
<dbReference type="ProteomicsDB" id="242391"/>
<dbReference type="EnsemblPlants" id="AT1G55930.1">
    <property type="protein sequence ID" value="AT1G55930.1"/>
    <property type="gene ID" value="AT1G55930"/>
</dbReference>
<dbReference type="GeneID" id="842044"/>
<dbReference type="Gramene" id="AT1G55930.1">
    <property type="protein sequence ID" value="AT1G55930.1"/>
    <property type="gene ID" value="AT1G55930"/>
</dbReference>
<dbReference type="KEGG" id="ath:AT1G55930"/>
<dbReference type="Araport" id="AT1G55930"/>
<dbReference type="TAIR" id="AT1G55930"/>
<dbReference type="eggNOG" id="KOG2118">
    <property type="taxonomic scope" value="Eukaryota"/>
</dbReference>
<dbReference type="HOGENOM" id="CLU_015237_4_4_1"/>
<dbReference type="InParanoid" id="Q84R21"/>
<dbReference type="PRO" id="PR:Q84R21"/>
<dbReference type="Proteomes" id="UP000006548">
    <property type="component" value="Chromosome 1"/>
</dbReference>
<dbReference type="ExpressionAtlas" id="Q84R21">
    <property type="expression patterns" value="baseline and differential"/>
</dbReference>
<dbReference type="GO" id="GO:0009941">
    <property type="term" value="C:chloroplast envelope"/>
    <property type="evidence" value="ECO:0007005"/>
    <property type="project" value="TAIR"/>
</dbReference>
<dbReference type="GO" id="GO:0031969">
    <property type="term" value="C:chloroplast membrane"/>
    <property type="evidence" value="ECO:0007669"/>
    <property type="project" value="UniProtKB-SubCell"/>
</dbReference>
<dbReference type="GO" id="GO:0005634">
    <property type="term" value="C:nucleus"/>
    <property type="evidence" value="ECO:0007005"/>
    <property type="project" value="TAIR"/>
</dbReference>
<dbReference type="GO" id="GO:0009536">
    <property type="term" value="C:plastid"/>
    <property type="evidence" value="ECO:0007005"/>
    <property type="project" value="TAIR"/>
</dbReference>
<dbReference type="GO" id="GO:0050660">
    <property type="term" value="F:flavin adenine dinucleotide binding"/>
    <property type="evidence" value="ECO:0007669"/>
    <property type="project" value="InterPro"/>
</dbReference>
<dbReference type="CDD" id="cd04590">
    <property type="entry name" value="CBS_pair_CorC_HlyC_assoc"/>
    <property type="match status" value="1"/>
</dbReference>
<dbReference type="FunFam" id="3.30.465.10:FF:000044">
    <property type="entry name" value="DUF21 domain-containing protein At1g55930, chloroplastic"/>
    <property type="match status" value="1"/>
</dbReference>
<dbReference type="FunFam" id="3.10.580.10:FF:000002">
    <property type="entry name" value="Magnesium/cobalt efflux protein CorC"/>
    <property type="match status" value="1"/>
</dbReference>
<dbReference type="Gene3D" id="3.30.465.10">
    <property type="match status" value="1"/>
</dbReference>
<dbReference type="Gene3D" id="3.10.580.10">
    <property type="entry name" value="CBS-domain"/>
    <property type="match status" value="1"/>
</dbReference>
<dbReference type="InterPro" id="IPR000644">
    <property type="entry name" value="CBS_dom"/>
</dbReference>
<dbReference type="InterPro" id="IPR046342">
    <property type="entry name" value="CBS_dom_sf"/>
</dbReference>
<dbReference type="InterPro" id="IPR002550">
    <property type="entry name" value="CNNM"/>
</dbReference>
<dbReference type="InterPro" id="IPR036318">
    <property type="entry name" value="FAD-bd_PCMH-like_sf"/>
</dbReference>
<dbReference type="InterPro" id="IPR016169">
    <property type="entry name" value="FAD-bd_PCMH_sub2"/>
</dbReference>
<dbReference type="InterPro" id="IPR044751">
    <property type="entry name" value="Ion_transp-like_CBS"/>
</dbReference>
<dbReference type="InterPro" id="IPR005170">
    <property type="entry name" value="Transptr-assoc_dom"/>
</dbReference>
<dbReference type="PANTHER" id="PTHR22777">
    <property type="entry name" value="HEMOLYSIN-RELATED"/>
    <property type="match status" value="1"/>
</dbReference>
<dbReference type="PANTHER" id="PTHR22777:SF17">
    <property type="entry name" value="UPF0053 PROTEIN SLL0260"/>
    <property type="match status" value="1"/>
</dbReference>
<dbReference type="Pfam" id="PF00571">
    <property type="entry name" value="CBS"/>
    <property type="match status" value="2"/>
</dbReference>
<dbReference type="Pfam" id="PF01595">
    <property type="entry name" value="CNNM"/>
    <property type="match status" value="1"/>
</dbReference>
<dbReference type="Pfam" id="PF03471">
    <property type="entry name" value="CorC_HlyC"/>
    <property type="match status" value="1"/>
</dbReference>
<dbReference type="SMART" id="SM01091">
    <property type="entry name" value="CorC_HlyC"/>
    <property type="match status" value="1"/>
</dbReference>
<dbReference type="SUPFAM" id="SSF54631">
    <property type="entry name" value="CBS-domain pair"/>
    <property type="match status" value="1"/>
</dbReference>
<dbReference type="SUPFAM" id="SSF56176">
    <property type="entry name" value="FAD-binding/transporter-associated domain-like"/>
    <property type="match status" value="1"/>
</dbReference>
<dbReference type="PROSITE" id="PS51371">
    <property type="entry name" value="CBS"/>
    <property type="match status" value="2"/>
</dbReference>
<dbReference type="PROSITE" id="PS51846">
    <property type="entry name" value="CNNM"/>
    <property type="match status" value="1"/>
</dbReference>
<organism>
    <name type="scientific">Arabidopsis thaliana</name>
    <name type="common">Mouse-ear cress</name>
    <dbReference type="NCBI Taxonomy" id="3702"/>
    <lineage>
        <taxon>Eukaryota</taxon>
        <taxon>Viridiplantae</taxon>
        <taxon>Streptophyta</taxon>
        <taxon>Embryophyta</taxon>
        <taxon>Tracheophyta</taxon>
        <taxon>Spermatophyta</taxon>
        <taxon>Magnoliopsida</taxon>
        <taxon>eudicotyledons</taxon>
        <taxon>Gunneridae</taxon>
        <taxon>Pentapetalae</taxon>
        <taxon>rosids</taxon>
        <taxon>malvids</taxon>
        <taxon>Brassicales</taxon>
        <taxon>Brassicaceae</taxon>
        <taxon>Camelineae</taxon>
        <taxon>Arabidopsis</taxon>
    </lineage>
</organism>
<sequence>MELDLSVLGRSFIVTRRNSSITRPCIQSSNFSVRVLQRNKHRPLCFSTNPSNSSFIRFQKGCDFSHRCQFVVLSATGDHVGISQKHSDSTEKVDSIRILLKRGIVLGAVVCGVLFYGCGKVLASTSVVDVAFSKSILLLKNAWPKTSQVLKVLREQGLILAVLLGLSAFFSMAETSITTLWPWKVRELAEKEPENGVFRMLRSDVTRFLTTILIGTTVVNIAATALVTKAATAIFGEAGVSAATGVMTVAILLLTEITPKSVAVHNAQEVARIVVRPVAWLSLILYPVGRVVTYLSMGILKILGLKGRSEPYVTEDELKLMLRGAELSGAIEEEEQDMIENVLEIKDTHVREVMTPLVDVVAIDGSGSLVDFHNFWVTHQYSRVPVFEQRIDNIVGIAYAMDLLDYVPKGKLLESTTVVDMAHKPAFFVPDSMSVWNLLREFRIRKVHMAVVLNEYGGTIGIVTLEDVVEEIVGEIFDENDSKEEIQKKTGYIVMRAEGIYDVDANTSIDQLSEELNIKMAEGHQYETVSGFVCEAFGYIPKTGESVTVVLEKENWEENDEQDEGKHERQDQKEKHQIYRLEILAGNARKVSAVRFERVSDMDQVSEARDVKNMVPKFVRKWSSEEDSDGNLQAKNAVFDEHLIAETESMKKE</sequence>
<proteinExistence type="evidence at transcript level"/>
<feature type="transit peptide" description="Chloroplast" evidence="1">
    <location>
        <begin position="1"/>
        <end position="72"/>
    </location>
</feature>
<feature type="chain" id="PRO_0000411686" description="DUF21 domain-containing protein At1g55930, chloroplastic">
    <location>
        <begin position="73"/>
        <end position="653"/>
    </location>
</feature>
<feature type="transmembrane region" description="Helical" evidence="1">
    <location>
        <begin position="103"/>
        <end position="123"/>
    </location>
</feature>
<feature type="transmembrane region" description="Helical" evidence="1">
    <location>
        <begin position="157"/>
        <end position="177"/>
    </location>
</feature>
<feature type="transmembrane region" description="Helical" evidence="1">
    <location>
        <begin position="208"/>
        <end position="228"/>
    </location>
</feature>
<feature type="transmembrane region" description="Helical" evidence="1">
    <location>
        <begin position="234"/>
        <end position="254"/>
    </location>
</feature>
<feature type="transmembrane region" description="Helical" evidence="1">
    <location>
        <begin position="280"/>
        <end position="300"/>
    </location>
</feature>
<feature type="domain" description="CNNM transmembrane" evidence="3">
    <location>
        <begin position="149"/>
        <end position="335"/>
    </location>
</feature>
<feature type="domain" description="CBS 1" evidence="2">
    <location>
        <begin position="354"/>
        <end position="415"/>
    </location>
</feature>
<feature type="domain" description="CBS 2" evidence="2">
    <location>
        <begin position="421"/>
        <end position="479"/>
    </location>
</feature>
<feature type="sequence conflict" description="In Ref. 3; AAP04147 and 4; BAF01462." evidence="4" ref="3 4">
    <original>S</original>
    <variation>P</variation>
    <location>
        <position position="382"/>
    </location>
</feature>
<accession>Q84R21</accession>
<accession>F4I3H6</accession>
<accession>Q9LG18</accession>
<protein>
    <recommendedName>
        <fullName>DUF21 domain-containing protein At1g55930, chloroplastic</fullName>
    </recommendedName>
    <alternativeName>
        <fullName>CBS domain-containing protein CBSDUFCH2</fullName>
    </alternativeName>
</protein>